<comment type="function">
    <text evidence="1">F(1)F(0) ATP synthase produces ATP from ADP in the presence of a proton or sodium gradient. F-type ATPases consist of two structural domains, F(1) containing the extramembraneous catalytic core and F(0) containing the membrane proton channel, linked together by a central stalk and a peripheral stalk. During catalysis, ATP synthesis in the catalytic domain of F(1) is coupled via a rotary mechanism of the central stalk subunits to proton translocation.</text>
</comment>
<comment type="function">
    <text evidence="1">Component of the F(0) channel, it forms part of the peripheral stalk, linking F(1) to F(0).</text>
</comment>
<comment type="subunit">
    <text evidence="1">F-type ATPases have 2 components, F(1) - the catalytic core - and F(0) - the membrane proton channel. F(1) has five subunits: alpha(3), beta(3), gamma(1), delta(1), epsilon(1). F(0) has three main subunits: a(1), b(2) and c(10-14). The alpha and beta chains form an alternating ring which encloses part of the gamma chain. F(1) is attached to F(0) by a central stalk formed by the gamma and epsilon chains, while a peripheral stalk is formed by the delta and b chains.</text>
</comment>
<comment type="subcellular location">
    <subcellularLocation>
        <location evidence="1">Cell inner membrane</location>
        <topology evidence="1">Single-pass membrane protein</topology>
    </subcellularLocation>
</comment>
<comment type="similarity">
    <text evidence="1">Belongs to the ATPase B chain family.</text>
</comment>
<dbReference type="EMBL" id="CP000926">
    <property type="protein sequence ID" value="ABZ01317.1"/>
    <property type="molecule type" value="Genomic_DNA"/>
</dbReference>
<dbReference type="RefSeq" id="WP_003260032.1">
    <property type="nucleotide sequence ID" value="NC_010322.1"/>
</dbReference>
<dbReference type="SMR" id="B0KRB2"/>
<dbReference type="KEGG" id="ppg:PputGB1_5435"/>
<dbReference type="eggNOG" id="COG0711">
    <property type="taxonomic scope" value="Bacteria"/>
</dbReference>
<dbReference type="HOGENOM" id="CLU_079215_4_5_6"/>
<dbReference type="Proteomes" id="UP000002157">
    <property type="component" value="Chromosome"/>
</dbReference>
<dbReference type="GO" id="GO:0005886">
    <property type="term" value="C:plasma membrane"/>
    <property type="evidence" value="ECO:0007669"/>
    <property type="project" value="UniProtKB-SubCell"/>
</dbReference>
<dbReference type="GO" id="GO:0045259">
    <property type="term" value="C:proton-transporting ATP synthase complex"/>
    <property type="evidence" value="ECO:0007669"/>
    <property type="project" value="UniProtKB-KW"/>
</dbReference>
<dbReference type="GO" id="GO:0046933">
    <property type="term" value="F:proton-transporting ATP synthase activity, rotational mechanism"/>
    <property type="evidence" value="ECO:0007669"/>
    <property type="project" value="UniProtKB-UniRule"/>
</dbReference>
<dbReference type="GO" id="GO:0046961">
    <property type="term" value="F:proton-transporting ATPase activity, rotational mechanism"/>
    <property type="evidence" value="ECO:0007669"/>
    <property type="project" value="TreeGrafter"/>
</dbReference>
<dbReference type="CDD" id="cd06503">
    <property type="entry name" value="ATP-synt_Fo_b"/>
    <property type="match status" value="1"/>
</dbReference>
<dbReference type="Gene3D" id="6.10.250.1580">
    <property type="match status" value="1"/>
</dbReference>
<dbReference type="HAMAP" id="MF_01398">
    <property type="entry name" value="ATP_synth_b_bprime"/>
    <property type="match status" value="1"/>
</dbReference>
<dbReference type="InterPro" id="IPR028987">
    <property type="entry name" value="ATP_synth_B-like_membr_sf"/>
</dbReference>
<dbReference type="InterPro" id="IPR002146">
    <property type="entry name" value="ATP_synth_b/b'su_bac/chlpt"/>
</dbReference>
<dbReference type="InterPro" id="IPR005864">
    <property type="entry name" value="ATP_synth_F0_bsu_bac"/>
</dbReference>
<dbReference type="InterPro" id="IPR050059">
    <property type="entry name" value="ATP_synthase_B_chain"/>
</dbReference>
<dbReference type="NCBIfam" id="TIGR01144">
    <property type="entry name" value="ATP_synt_b"/>
    <property type="match status" value="1"/>
</dbReference>
<dbReference type="NCBIfam" id="NF004411">
    <property type="entry name" value="PRK05759.1-2"/>
    <property type="match status" value="1"/>
</dbReference>
<dbReference type="NCBIfam" id="NF004413">
    <property type="entry name" value="PRK05759.1-4"/>
    <property type="match status" value="1"/>
</dbReference>
<dbReference type="PANTHER" id="PTHR33445:SF1">
    <property type="entry name" value="ATP SYNTHASE SUBUNIT B"/>
    <property type="match status" value="1"/>
</dbReference>
<dbReference type="PANTHER" id="PTHR33445">
    <property type="entry name" value="ATP SYNTHASE SUBUNIT B', CHLOROPLASTIC"/>
    <property type="match status" value="1"/>
</dbReference>
<dbReference type="Pfam" id="PF00430">
    <property type="entry name" value="ATP-synt_B"/>
    <property type="match status" value="1"/>
</dbReference>
<dbReference type="SUPFAM" id="SSF81573">
    <property type="entry name" value="F1F0 ATP synthase subunit B, membrane domain"/>
    <property type="match status" value="1"/>
</dbReference>
<gene>
    <name evidence="1" type="primary">atpF</name>
    <name type="ordered locus">PputGB1_5435</name>
</gene>
<protein>
    <recommendedName>
        <fullName evidence="1">ATP synthase subunit b</fullName>
    </recommendedName>
    <alternativeName>
        <fullName evidence="1">ATP synthase F(0) sector subunit b</fullName>
    </alternativeName>
    <alternativeName>
        <fullName evidence="1">ATPase subunit I</fullName>
    </alternativeName>
    <alternativeName>
        <fullName evidence="1">F-type ATPase subunit b</fullName>
        <shortName evidence="1">F-ATPase subunit b</shortName>
    </alternativeName>
</protein>
<organism>
    <name type="scientific">Pseudomonas putida (strain GB-1)</name>
    <dbReference type="NCBI Taxonomy" id="76869"/>
    <lineage>
        <taxon>Bacteria</taxon>
        <taxon>Pseudomonadati</taxon>
        <taxon>Pseudomonadota</taxon>
        <taxon>Gammaproteobacteria</taxon>
        <taxon>Pseudomonadales</taxon>
        <taxon>Pseudomonadaceae</taxon>
        <taxon>Pseudomonas</taxon>
    </lineage>
</organism>
<name>ATPF_PSEPG</name>
<sequence>MNINATLIGQSVAFLIFVLFCMKYVWPPVITALQERQKKIADGLDAANRAARDLELAQEKAGQQLREAKAQAAEIIEQSKKRAAQLVEEARDQARVEADRVKAQALAEIEQELNSAKDALRAQVGALAVGGAEKILGATIDQNAHAELVNKLAAEI</sequence>
<keyword id="KW-0066">ATP synthesis</keyword>
<keyword id="KW-0997">Cell inner membrane</keyword>
<keyword id="KW-1003">Cell membrane</keyword>
<keyword id="KW-0138">CF(0)</keyword>
<keyword id="KW-0375">Hydrogen ion transport</keyword>
<keyword id="KW-0406">Ion transport</keyword>
<keyword id="KW-0472">Membrane</keyword>
<keyword id="KW-0812">Transmembrane</keyword>
<keyword id="KW-1133">Transmembrane helix</keyword>
<keyword id="KW-0813">Transport</keyword>
<proteinExistence type="inferred from homology"/>
<reference key="1">
    <citation type="submission" date="2008-01" db="EMBL/GenBank/DDBJ databases">
        <title>Complete sequence of Pseudomonas putida GB-1.</title>
        <authorList>
            <consortium name="US DOE Joint Genome Institute"/>
            <person name="Copeland A."/>
            <person name="Lucas S."/>
            <person name="Lapidus A."/>
            <person name="Barry K."/>
            <person name="Glavina del Rio T."/>
            <person name="Dalin E."/>
            <person name="Tice H."/>
            <person name="Pitluck S."/>
            <person name="Bruce D."/>
            <person name="Goodwin L."/>
            <person name="Chertkov O."/>
            <person name="Brettin T."/>
            <person name="Detter J.C."/>
            <person name="Han C."/>
            <person name="Kuske C.R."/>
            <person name="Schmutz J."/>
            <person name="Larimer F."/>
            <person name="Land M."/>
            <person name="Hauser L."/>
            <person name="Kyrpides N."/>
            <person name="Kim E."/>
            <person name="McCarthy J.K."/>
            <person name="Richardson P."/>
        </authorList>
    </citation>
    <scope>NUCLEOTIDE SEQUENCE [LARGE SCALE GENOMIC DNA]</scope>
    <source>
        <strain>GB-1</strain>
    </source>
</reference>
<feature type="chain" id="PRO_0000368690" description="ATP synthase subunit b">
    <location>
        <begin position="1"/>
        <end position="156"/>
    </location>
</feature>
<feature type="transmembrane region" description="Helical" evidence="1">
    <location>
        <begin position="12"/>
        <end position="32"/>
    </location>
</feature>
<accession>B0KRB2</accession>
<evidence type="ECO:0000255" key="1">
    <source>
        <dbReference type="HAMAP-Rule" id="MF_01398"/>
    </source>
</evidence>